<sequence>MKAINIALDGPAAAGKSTIAKRVASELSMIYVDTGAMYRALTYKYLKLNKTEDFAKLVDQTTLDLTYKADKGQCVILDNEDVTDFLRNNDVTQHVSYVASKEPVRSFAVKKQKELAAEKGIVMDGRDIGTVVLPDADLKVYMIASVEERAERRYKDNQLRGIESNFEDLKRDIEARDQYDMNREISPLRKADDAVTLDTTGKSIEEVTDEILAMVSQIK</sequence>
<protein>
    <recommendedName>
        <fullName evidence="1">Cytidylate kinase</fullName>
        <shortName evidence="1">CK</shortName>
        <ecNumber evidence="1">2.7.4.25</ecNumber>
    </recommendedName>
    <alternativeName>
        <fullName evidence="1">Cytidine monophosphate kinase</fullName>
        <shortName evidence="1">CMP kinase</shortName>
    </alternativeName>
</protein>
<organism>
    <name type="scientific">Staphylococcus aureus (strain MW2)</name>
    <dbReference type="NCBI Taxonomy" id="196620"/>
    <lineage>
        <taxon>Bacteria</taxon>
        <taxon>Bacillati</taxon>
        <taxon>Bacillota</taxon>
        <taxon>Bacilli</taxon>
        <taxon>Bacillales</taxon>
        <taxon>Staphylococcaceae</taxon>
        <taxon>Staphylococcus</taxon>
    </lineage>
</organism>
<proteinExistence type="evidence at protein level"/>
<accession>P63807</accession>
<accession>Q99U12</accession>
<feature type="chain" id="PRO_0000131977" description="Cytidylate kinase">
    <location>
        <begin position="1"/>
        <end position="219"/>
    </location>
</feature>
<feature type="binding site" evidence="1">
    <location>
        <begin position="10"/>
        <end position="18"/>
    </location>
    <ligand>
        <name>ATP</name>
        <dbReference type="ChEBI" id="CHEBI:30616"/>
    </ligand>
</feature>
<feature type="strand" evidence="2">
    <location>
        <begin position="6"/>
        <end position="9"/>
    </location>
</feature>
<feature type="helix" evidence="2">
    <location>
        <begin position="16"/>
        <end position="26"/>
    </location>
</feature>
<feature type="strand" evidence="2">
    <location>
        <begin position="30"/>
        <end position="33"/>
    </location>
</feature>
<feature type="helix" evidence="2">
    <location>
        <begin position="34"/>
        <end position="47"/>
    </location>
</feature>
<feature type="helix" evidence="2">
    <location>
        <begin position="54"/>
        <end position="59"/>
    </location>
</feature>
<feature type="strand" evidence="2">
    <location>
        <begin position="63"/>
        <end position="67"/>
    </location>
</feature>
<feature type="strand" evidence="2">
    <location>
        <begin position="73"/>
        <end position="77"/>
    </location>
</feature>
<feature type="helix" evidence="2">
    <location>
        <begin position="83"/>
        <end position="85"/>
    </location>
</feature>
<feature type="strand" evidence="2">
    <location>
        <begin position="86"/>
        <end position="89"/>
    </location>
</feature>
<feature type="helix" evidence="2">
    <location>
        <begin position="90"/>
        <end position="99"/>
    </location>
</feature>
<feature type="helix" evidence="2">
    <location>
        <begin position="102"/>
        <end position="116"/>
    </location>
</feature>
<feature type="strand" evidence="2">
    <location>
        <begin position="121"/>
        <end position="127"/>
    </location>
</feature>
<feature type="helix" evidence="2">
    <location>
        <begin position="128"/>
        <end position="132"/>
    </location>
</feature>
<feature type="strand" evidence="2">
    <location>
        <begin position="137"/>
        <end position="143"/>
    </location>
</feature>
<feature type="helix" evidence="2">
    <location>
        <begin position="146"/>
        <end position="159"/>
    </location>
</feature>
<feature type="helix" evidence="2">
    <location>
        <begin position="166"/>
        <end position="182"/>
    </location>
</feature>
<feature type="strand" evidence="2">
    <location>
        <begin position="184"/>
        <end position="186"/>
    </location>
</feature>
<feature type="strand" evidence="2">
    <location>
        <begin position="195"/>
        <end position="198"/>
    </location>
</feature>
<feature type="helix" evidence="2">
    <location>
        <begin position="204"/>
        <end position="216"/>
    </location>
</feature>
<gene>
    <name evidence="1" type="primary">cmk</name>
    <name type="ordered locus">MW1366</name>
</gene>
<dbReference type="EC" id="2.7.4.25" evidence="1"/>
<dbReference type="EMBL" id="BA000033">
    <property type="protein sequence ID" value="BAB95231.1"/>
    <property type="molecule type" value="Genomic_DNA"/>
</dbReference>
<dbReference type="RefSeq" id="WP_000644391.1">
    <property type="nucleotide sequence ID" value="NC_003923.1"/>
</dbReference>
<dbReference type="PDB" id="2H92">
    <property type="method" value="X-ray"/>
    <property type="resolution" value="2.30 A"/>
    <property type="chains" value="A/B/C=1-219"/>
</dbReference>
<dbReference type="PDBsum" id="2H92"/>
<dbReference type="SMR" id="P63807"/>
<dbReference type="KEGG" id="sam:MW1366"/>
<dbReference type="HOGENOM" id="CLU_079959_0_2_9"/>
<dbReference type="EvolutionaryTrace" id="P63807"/>
<dbReference type="GO" id="GO:0005829">
    <property type="term" value="C:cytosol"/>
    <property type="evidence" value="ECO:0007669"/>
    <property type="project" value="TreeGrafter"/>
</dbReference>
<dbReference type="GO" id="GO:0005524">
    <property type="term" value="F:ATP binding"/>
    <property type="evidence" value="ECO:0007669"/>
    <property type="project" value="UniProtKB-UniRule"/>
</dbReference>
<dbReference type="GO" id="GO:0036430">
    <property type="term" value="F:CMP kinase activity"/>
    <property type="evidence" value="ECO:0007669"/>
    <property type="project" value="RHEA"/>
</dbReference>
<dbReference type="GO" id="GO:0036431">
    <property type="term" value="F:dCMP kinase activity"/>
    <property type="evidence" value="ECO:0007669"/>
    <property type="project" value="RHEA"/>
</dbReference>
<dbReference type="GO" id="GO:0015949">
    <property type="term" value="P:nucleobase-containing small molecule interconversion"/>
    <property type="evidence" value="ECO:0007669"/>
    <property type="project" value="TreeGrafter"/>
</dbReference>
<dbReference type="GO" id="GO:0006220">
    <property type="term" value="P:pyrimidine nucleotide metabolic process"/>
    <property type="evidence" value="ECO:0007669"/>
    <property type="project" value="UniProtKB-UniRule"/>
</dbReference>
<dbReference type="CDD" id="cd02020">
    <property type="entry name" value="CMPK"/>
    <property type="match status" value="1"/>
</dbReference>
<dbReference type="Gene3D" id="3.40.50.300">
    <property type="entry name" value="P-loop containing nucleotide triphosphate hydrolases"/>
    <property type="match status" value="1"/>
</dbReference>
<dbReference type="HAMAP" id="MF_00238">
    <property type="entry name" value="Cytidyl_kinase_type1"/>
    <property type="match status" value="1"/>
</dbReference>
<dbReference type="InterPro" id="IPR003136">
    <property type="entry name" value="Cytidylate_kin"/>
</dbReference>
<dbReference type="InterPro" id="IPR011994">
    <property type="entry name" value="Cytidylate_kinase_dom"/>
</dbReference>
<dbReference type="InterPro" id="IPR027417">
    <property type="entry name" value="P-loop_NTPase"/>
</dbReference>
<dbReference type="NCBIfam" id="TIGR00017">
    <property type="entry name" value="cmk"/>
    <property type="match status" value="1"/>
</dbReference>
<dbReference type="PANTHER" id="PTHR21299:SF2">
    <property type="entry name" value="CYTIDYLATE KINASE"/>
    <property type="match status" value="1"/>
</dbReference>
<dbReference type="PANTHER" id="PTHR21299">
    <property type="entry name" value="CYTIDYLATE KINASE/PANTOATE-BETA-ALANINE LIGASE"/>
    <property type="match status" value="1"/>
</dbReference>
<dbReference type="Pfam" id="PF02224">
    <property type="entry name" value="Cytidylate_kin"/>
    <property type="match status" value="1"/>
</dbReference>
<dbReference type="SUPFAM" id="SSF52540">
    <property type="entry name" value="P-loop containing nucleoside triphosphate hydrolases"/>
    <property type="match status" value="1"/>
</dbReference>
<comment type="catalytic activity">
    <reaction evidence="1">
        <text>CMP + ATP = CDP + ADP</text>
        <dbReference type="Rhea" id="RHEA:11600"/>
        <dbReference type="ChEBI" id="CHEBI:30616"/>
        <dbReference type="ChEBI" id="CHEBI:58069"/>
        <dbReference type="ChEBI" id="CHEBI:60377"/>
        <dbReference type="ChEBI" id="CHEBI:456216"/>
        <dbReference type="EC" id="2.7.4.25"/>
    </reaction>
</comment>
<comment type="catalytic activity">
    <reaction evidence="1">
        <text>dCMP + ATP = dCDP + ADP</text>
        <dbReference type="Rhea" id="RHEA:25094"/>
        <dbReference type="ChEBI" id="CHEBI:30616"/>
        <dbReference type="ChEBI" id="CHEBI:57566"/>
        <dbReference type="ChEBI" id="CHEBI:58593"/>
        <dbReference type="ChEBI" id="CHEBI:456216"/>
        <dbReference type="EC" id="2.7.4.25"/>
    </reaction>
</comment>
<comment type="subcellular location">
    <subcellularLocation>
        <location evidence="1">Cytoplasm</location>
    </subcellularLocation>
</comment>
<comment type="similarity">
    <text evidence="1">Belongs to the cytidylate kinase family. Type 1 subfamily.</text>
</comment>
<name>KCY_STAAW</name>
<evidence type="ECO:0000255" key="1">
    <source>
        <dbReference type="HAMAP-Rule" id="MF_00238"/>
    </source>
</evidence>
<evidence type="ECO:0007829" key="2">
    <source>
        <dbReference type="PDB" id="2H92"/>
    </source>
</evidence>
<reference key="1">
    <citation type="journal article" date="2002" name="Lancet">
        <title>Genome and virulence determinants of high virulence community-acquired MRSA.</title>
        <authorList>
            <person name="Baba T."/>
            <person name="Takeuchi F."/>
            <person name="Kuroda M."/>
            <person name="Yuzawa H."/>
            <person name="Aoki K."/>
            <person name="Oguchi A."/>
            <person name="Nagai Y."/>
            <person name="Iwama N."/>
            <person name="Asano K."/>
            <person name="Naimi T."/>
            <person name="Kuroda H."/>
            <person name="Cui L."/>
            <person name="Yamamoto K."/>
            <person name="Hiramatsu K."/>
        </authorList>
    </citation>
    <scope>NUCLEOTIDE SEQUENCE [LARGE SCALE GENOMIC DNA]</scope>
    <source>
        <strain>MW2</strain>
    </source>
</reference>
<keyword id="KW-0002">3D-structure</keyword>
<keyword id="KW-0067">ATP-binding</keyword>
<keyword id="KW-0963">Cytoplasm</keyword>
<keyword id="KW-0418">Kinase</keyword>
<keyword id="KW-0547">Nucleotide-binding</keyword>
<keyword id="KW-0808">Transferase</keyword>